<accession>A9M2W7</accession>
<name>NUSB_NEIM0</name>
<feature type="chain" id="PRO_1000075193" description="Transcription antitermination protein NusB">
    <location>
        <begin position="1"/>
        <end position="141"/>
    </location>
</feature>
<comment type="function">
    <text evidence="1">Involved in transcription antitermination. Required for transcription of ribosomal RNA (rRNA) genes. Binds specifically to the boxA antiterminator sequence of the ribosomal RNA (rrn) operons.</text>
</comment>
<comment type="similarity">
    <text evidence="1">Belongs to the NusB family.</text>
</comment>
<dbReference type="EMBL" id="CP000381">
    <property type="protein sequence ID" value="ABX72836.1"/>
    <property type="molecule type" value="Genomic_DNA"/>
</dbReference>
<dbReference type="RefSeq" id="WP_002221275.1">
    <property type="nucleotide sequence ID" value="NC_010120.1"/>
</dbReference>
<dbReference type="SMR" id="A9M2W7"/>
<dbReference type="KEGG" id="nmn:NMCC_0640"/>
<dbReference type="HOGENOM" id="CLU_087843_4_1_4"/>
<dbReference type="Proteomes" id="UP000001177">
    <property type="component" value="Chromosome"/>
</dbReference>
<dbReference type="GO" id="GO:0005829">
    <property type="term" value="C:cytosol"/>
    <property type="evidence" value="ECO:0007669"/>
    <property type="project" value="TreeGrafter"/>
</dbReference>
<dbReference type="GO" id="GO:0003723">
    <property type="term" value="F:RNA binding"/>
    <property type="evidence" value="ECO:0007669"/>
    <property type="project" value="UniProtKB-UniRule"/>
</dbReference>
<dbReference type="GO" id="GO:0006353">
    <property type="term" value="P:DNA-templated transcription termination"/>
    <property type="evidence" value="ECO:0007669"/>
    <property type="project" value="UniProtKB-UniRule"/>
</dbReference>
<dbReference type="GO" id="GO:0031564">
    <property type="term" value="P:transcription antitermination"/>
    <property type="evidence" value="ECO:0007669"/>
    <property type="project" value="UniProtKB-KW"/>
</dbReference>
<dbReference type="FunFam" id="1.10.940.10:FF:000010">
    <property type="entry name" value="Transcription antitermination protein NusB"/>
    <property type="match status" value="1"/>
</dbReference>
<dbReference type="Gene3D" id="1.10.940.10">
    <property type="entry name" value="NusB-like"/>
    <property type="match status" value="1"/>
</dbReference>
<dbReference type="HAMAP" id="MF_00073">
    <property type="entry name" value="NusB"/>
    <property type="match status" value="1"/>
</dbReference>
<dbReference type="InterPro" id="IPR035926">
    <property type="entry name" value="NusB-like_sf"/>
</dbReference>
<dbReference type="InterPro" id="IPR011605">
    <property type="entry name" value="NusB_fam"/>
</dbReference>
<dbReference type="InterPro" id="IPR006027">
    <property type="entry name" value="NusB_RsmB_TIM44"/>
</dbReference>
<dbReference type="NCBIfam" id="TIGR01951">
    <property type="entry name" value="nusB"/>
    <property type="match status" value="1"/>
</dbReference>
<dbReference type="PANTHER" id="PTHR11078:SF3">
    <property type="entry name" value="ANTITERMINATION NUSB DOMAIN-CONTAINING PROTEIN"/>
    <property type="match status" value="1"/>
</dbReference>
<dbReference type="PANTHER" id="PTHR11078">
    <property type="entry name" value="N UTILIZATION SUBSTANCE PROTEIN B-RELATED"/>
    <property type="match status" value="1"/>
</dbReference>
<dbReference type="Pfam" id="PF01029">
    <property type="entry name" value="NusB"/>
    <property type="match status" value="1"/>
</dbReference>
<dbReference type="SUPFAM" id="SSF48013">
    <property type="entry name" value="NusB-like"/>
    <property type="match status" value="1"/>
</dbReference>
<protein>
    <recommendedName>
        <fullName evidence="1">Transcription antitermination protein NusB</fullName>
    </recommendedName>
    <alternativeName>
        <fullName evidence="1">Antitermination factor NusB</fullName>
    </alternativeName>
</protein>
<organism>
    <name type="scientific">Neisseria meningitidis serogroup C (strain 053442)</name>
    <dbReference type="NCBI Taxonomy" id="374833"/>
    <lineage>
        <taxon>Bacteria</taxon>
        <taxon>Pseudomonadati</taxon>
        <taxon>Pseudomonadota</taxon>
        <taxon>Betaproteobacteria</taxon>
        <taxon>Neisseriales</taxon>
        <taxon>Neisseriaceae</taxon>
        <taxon>Neisseria</taxon>
    </lineage>
</organism>
<reference key="1">
    <citation type="journal article" date="2008" name="Genomics">
        <title>Characterization of ST-4821 complex, a unique Neisseria meningitidis clone.</title>
        <authorList>
            <person name="Peng J."/>
            <person name="Yang L."/>
            <person name="Yang F."/>
            <person name="Yang J."/>
            <person name="Yan Y."/>
            <person name="Nie H."/>
            <person name="Zhang X."/>
            <person name="Xiong Z."/>
            <person name="Jiang Y."/>
            <person name="Cheng F."/>
            <person name="Xu X."/>
            <person name="Chen S."/>
            <person name="Sun L."/>
            <person name="Li W."/>
            <person name="Shen Y."/>
            <person name="Shao Z."/>
            <person name="Liang X."/>
            <person name="Xu J."/>
            <person name="Jin Q."/>
        </authorList>
    </citation>
    <scope>NUCLEOTIDE SEQUENCE [LARGE SCALE GENOMIC DNA]</scope>
    <source>
        <strain>053442</strain>
    </source>
</reference>
<sequence>MKTARRRSRELAVQAVYQSLINRTAAPEIAKNIREMPDFAKADEELFNKLFFGTQTNAADYIQKIRPLLDRDEKDLNPIERAVLLTACHELSAMPETPYPVIINEAIEVTKTFGGTDGHKFVNGILDKLAAQIRPDEPKRR</sequence>
<keyword id="KW-0694">RNA-binding</keyword>
<keyword id="KW-0804">Transcription</keyword>
<keyword id="KW-0889">Transcription antitermination</keyword>
<keyword id="KW-0805">Transcription regulation</keyword>
<proteinExistence type="inferred from homology"/>
<gene>
    <name evidence="1" type="primary">nusB</name>
    <name type="ordered locus">NMCC_0640</name>
</gene>
<evidence type="ECO:0000255" key="1">
    <source>
        <dbReference type="HAMAP-Rule" id="MF_00073"/>
    </source>
</evidence>